<feature type="chain" id="PRO_0000208299" description="Glutamyl-Q tRNA(Asp) synthetase">
    <location>
        <begin position="1"/>
        <end position="322"/>
    </location>
</feature>
<feature type="short sequence motif" description="'HIGH' region">
    <location>
        <begin position="31"/>
        <end position="41"/>
    </location>
</feature>
<feature type="short sequence motif" description="'KMSKS' region">
    <location>
        <begin position="247"/>
        <end position="251"/>
    </location>
</feature>
<feature type="binding site" evidence="1">
    <location>
        <begin position="28"/>
        <end position="32"/>
    </location>
    <ligand>
        <name>L-glutamate</name>
        <dbReference type="ChEBI" id="CHEBI:29985"/>
    </ligand>
</feature>
<feature type="binding site" evidence="1">
    <location>
        <position position="64"/>
    </location>
    <ligand>
        <name>L-glutamate</name>
        <dbReference type="ChEBI" id="CHEBI:29985"/>
    </ligand>
</feature>
<feature type="binding site" evidence="1">
    <location>
        <position position="120"/>
    </location>
    <ligand>
        <name>Zn(2+)</name>
        <dbReference type="ChEBI" id="CHEBI:29105"/>
    </ligand>
</feature>
<feature type="binding site" evidence="1">
    <location>
        <position position="122"/>
    </location>
    <ligand>
        <name>Zn(2+)</name>
        <dbReference type="ChEBI" id="CHEBI:29105"/>
    </ligand>
</feature>
<feature type="binding site" evidence="1">
    <location>
        <position position="134"/>
    </location>
    <ligand>
        <name>Zn(2+)</name>
        <dbReference type="ChEBI" id="CHEBI:29105"/>
    </ligand>
</feature>
<feature type="binding site" evidence="1">
    <location>
        <position position="138"/>
    </location>
    <ligand>
        <name>Zn(2+)</name>
        <dbReference type="ChEBI" id="CHEBI:29105"/>
    </ligand>
</feature>
<feature type="binding site" evidence="1">
    <location>
        <position position="191"/>
    </location>
    <ligand>
        <name>L-glutamate</name>
        <dbReference type="ChEBI" id="CHEBI:29985"/>
    </ligand>
</feature>
<feature type="binding site" evidence="1">
    <location>
        <position position="209"/>
    </location>
    <ligand>
        <name>L-glutamate</name>
        <dbReference type="ChEBI" id="CHEBI:29985"/>
    </ligand>
</feature>
<feature type="binding site" evidence="1">
    <location>
        <position position="250"/>
    </location>
    <ligand>
        <name>ATP</name>
        <dbReference type="ChEBI" id="CHEBI:30616"/>
    </ligand>
</feature>
<comment type="function">
    <text evidence="1">Catalyzes the tRNA-independent activation of glutamate in presence of ATP and the subsequent transfer of glutamate onto a tRNA(Asp). Glutamate is transferred on the 2-amino-5-(4,5-dihydroxy-2-cyclopenten-1-yl) moiety of the queuosine in the wobble position of the QUC anticodon.</text>
</comment>
<comment type="cofactor">
    <cofactor evidence="1">
        <name>Zn(2+)</name>
        <dbReference type="ChEBI" id="CHEBI:29105"/>
    </cofactor>
    <text evidence="1">Binds 1 zinc ion per subunit.</text>
</comment>
<comment type="similarity">
    <text evidence="1">Belongs to the class-I aminoacyl-tRNA synthetase family. GluQ subfamily.</text>
</comment>
<reference key="1">
    <citation type="journal article" date="2004" name="Proc. Natl. Acad. Sci. U.S.A.">
        <title>Genome sequence of the enterobacterial phytopathogen Erwinia carotovora subsp. atroseptica and characterization of virulence factors.</title>
        <authorList>
            <person name="Bell K.S."/>
            <person name="Sebaihia M."/>
            <person name="Pritchard L."/>
            <person name="Holden M.T.G."/>
            <person name="Hyman L.J."/>
            <person name="Holeva M.C."/>
            <person name="Thomson N.R."/>
            <person name="Bentley S.D."/>
            <person name="Churcher L.J.C."/>
            <person name="Mungall K."/>
            <person name="Atkin R."/>
            <person name="Bason N."/>
            <person name="Brooks K."/>
            <person name="Chillingworth T."/>
            <person name="Clark K."/>
            <person name="Doggett J."/>
            <person name="Fraser A."/>
            <person name="Hance Z."/>
            <person name="Hauser H."/>
            <person name="Jagels K."/>
            <person name="Moule S."/>
            <person name="Norbertczak H."/>
            <person name="Ormond D."/>
            <person name="Price C."/>
            <person name="Quail M.A."/>
            <person name="Sanders M."/>
            <person name="Walker D."/>
            <person name="Whitehead S."/>
            <person name="Salmond G.P.C."/>
            <person name="Birch P.R.J."/>
            <person name="Parkhill J."/>
            <person name="Toth I.K."/>
        </authorList>
    </citation>
    <scope>NUCLEOTIDE SEQUENCE [LARGE SCALE GENOMIC DNA]</scope>
    <source>
        <strain>SCRI 1043 / ATCC BAA-672</strain>
    </source>
</reference>
<organism>
    <name type="scientific">Pectobacterium atrosepticum (strain SCRI 1043 / ATCC BAA-672)</name>
    <name type="common">Erwinia carotovora subsp. atroseptica</name>
    <dbReference type="NCBI Taxonomy" id="218491"/>
    <lineage>
        <taxon>Bacteria</taxon>
        <taxon>Pseudomonadati</taxon>
        <taxon>Pseudomonadota</taxon>
        <taxon>Gammaproteobacteria</taxon>
        <taxon>Enterobacterales</taxon>
        <taxon>Pectobacteriaceae</taxon>
        <taxon>Pectobacterium</taxon>
    </lineage>
</organism>
<accession>Q6D1X9</accession>
<proteinExistence type="inferred from homology"/>
<gene>
    <name evidence="1" type="primary">gluQ</name>
    <name type="ordered locus">ECA3318</name>
</gene>
<dbReference type="EC" id="6.1.1.-" evidence="1"/>
<dbReference type="EMBL" id="BX950851">
    <property type="protein sequence ID" value="CAG76216.1"/>
    <property type="molecule type" value="Genomic_DNA"/>
</dbReference>
<dbReference type="SMR" id="Q6D1X9"/>
<dbReference type="STRING" id="218491.ECA3318"/>
<dbReference type="KEGG" id="eca:ECA3318"/>
<dbReference type="PATRIC" id="fig|218491.5.peg.3369"/>
<dbReference type="eggNOG" id="COG0008">
    <property type="taxonomic scope" value="Bacteria"/>
</dbReference>
<dbReference type="HOGENOM" id="CLU_015768_0_1_6"/>
<dbReference type="OrthoDB" id="9807503at2"/>
<dbReference type="Proteomes" id="UP000007966">
    <property type="component" value="Chromosome"/>
</dbReference>
<dbReference type="GO" id="GO:0005829">
    <property type="term" value="C:cytosol"/>
    <property type="evidence" value="ECO:0007669"/>
    <property type="project" value="TreeGrafter"/>
</dbReference>
<dbReference type="GO" id="GO:0005524">
    <property type="term" value="F:ATP binding"/>
    <property type="evidence" value="ECO:0007669"/>
    <property type="project" value="UniProtKB-KW"/>
</dbReference>
<dbReference type="GO" id="GO:0004818">
    <property type="term" value="F:glutamate-tRNA ligase activity"/>
    <property type="evidence" value="ECO:0007669"/>
    <property type="project" value="TreeGrafter"/>
</dbReference>
<dbReference type="GO" id="GO:0008270">
    <property type="term" value="F:zinc ion binding"/>
    <property type="evidence" value="ECO:0007669"/>
    <property type="project" value="UniProtKB-UniRule"/>
</dbReference>
<dbReference type="GO" id="GO:0006424">
    <property type="term" value="P:glutamyl-tRNA aminoacylation"/>
    <property type="evidence" value="ECO:0007669"/>
    <property type="project" value="InterPro"/>
</dbReference>
<dbReference type="GO" id="GO:0006400">
    <property type="term" value="P:tRNA modification"/>
    <property type="evidence" value="ECO:0007669"/>
    <property type="project" value="InterPro"/>
</dbReference>
<dbReference type="FunFam" id="3.40.50.620:FF:000093">
    <property type="entry name" value="Glutamyl-Q tRNA(Asp) synthetase"/>
    <property type="match status" value="1"/>
</dbReference>
<dbReference type="Gene3D" id="3.40.50.620">
    <property type="entry name" value="HUPs"/>
    <property type="match status" value="1"/>
</dbReference>
<dbReference type="HAMAP" id="MF_01428">
    <property type="entry name" value="Glu_Q_tRNA_synth"/>
    <property type="match status" value="1"/>
</dbReference>
<dbReference type="InterPro" id="IPR022380">
    <property type="entry name" value="Glu-Q_tRNA(Asp)_Synthase"/>
</dbReference>
<dbReference type="InterPro" id="IPR000924">
    <property type="entry name" value="Glu/Gln-tRNA-synth"/>
</dbReference>
<dbReference type="InterPro" id="IPR020058">
    <property type="entry name" value="Glu/Gln-tRNA-synth_Ib_cat-dom"/>
</dbReference>
<dbReference type="InterPro" id="IPR049940">
    <property type="entry name" value="GluQ/Sye"/>
</dbReference>
<dbReference type="InterPro" id="IPR014729">
    <property type="entry name" value="Rossmann-like_a/b/a_fold"/>
</dbReference>
<dbReference type="NCBIfam" id="NF004312">
    <property type="entry name" value="PRK05710.1-1"/>
    <property type="match status" value="1"/>
</dbReference>
<dbReference type="NCBIfam" id="NF004314">
    <property type="entry name" value="PRK05710.1-3"/>
    <property type="match status" value="1"/>
</dbReference>
<dbReference type="NCBIfam" id="TIGR03838">
    <property type="entry name" value="queuosine_YadB"/>
    <property type="match status" value="1"/>
</dbReference>
<dbReference type="PANTHER" id="PTHR43311">
    <property type="entry name" value="GLUTAMATE--TRNA LIGASE"/>
    <property type="match status" value="1"/>
</dbReference>
<dbReference type="PANTHER" id="PTHR43311:SF1">
    <property type="entry name" value="GLUTAMYL-Q TRNA(ASP) SYNTHETASE"/>
    <property type="match status" value="1"/>
</dbReference>
<dbReference type="Pfam" id="PF00749">
    <property type="entry name" value="tRNA-synt_1c"/>
    <property type="match status" value="1"/>
</dbReference>
<dbReference type="PRINTS" id="PR00987">
    <property type="entry name" value="TRNASYNTHGLU"/>
</dbReference>
<dbReference type="SUPFAM" id="SSF52374">
    <property type="entry name" value="Nucleotidylyl transferase"/>
    <property type="match status" value="1"/>
</dbReference>
<keyword id="KW-0030">Aminoacyl-tRNA synthetase</keyword>
<keyword id="KW-0067">ATP-binding</keyword>
<keyword id="KW-0436">Ligase</keyword>
<keyword id="KW-0479">Metal-binding</keyword>
<keyword id="KW-0547">Nucleotide-binding</keyword>
<keyword id="KW-1185">Reference proteome</keyword>
<keyword id="KW-0862">Zinc</keyword>
<name>GLUQ_PECAS</name>
<protein>
    <recommendedName>
        <fullName evidence="1">Glutamyl-Q tRNA(Asp) synthetase</fullName>
        <shortName evidence="1">Glu-Q-RSs</shortName>
        <ecNumber evidence="1">6.1.1.-</ecNumber>
    </recommendedName>
</protein>
<sequence length="322" mass="36470">MSVTDCFTQINSFTQINHFTETHRYVGRFAPSPSGDLHFGSLIAALGSYLQARSQQGRWLVRIEDIDPPREIPGAASRILAQLEHYGLYWDGDVVYQSQHHARYREILQQLQQQGMSYYCTCTRSRIQQLGGRYDGYCRTRNLSADNAAQRLRQTTPVFHFHDKLRGNLYADKTLAQEDFIIHRRDGLFAYNLAVVIDDNDQGITEIVRGADLIEPTVRQISLYQQLDYAIPTYVHLPLVLNTEGNKLSKQNHAPALPDSDPRPVLLAALQFLNQPLPENGQEMTLSALLAWSVAHWSLNIVPLQAAINTSTFTSAFSKGPW</sequence>
<evidence type="ECO:0000255" key="1">
    <source>
        <dbReference type="HAMAP-Rule" id="MF_01428"/>
    </source>
</evidence>